<dbReference type="EC" id="2.5.1.19" evidence="1"/>
<dbReference type="EMBL" id="CP001402">
    <property type="protein sequence ID" value="ACR42444.1"/>
    <property type="molecule type" value="Genomic_DNA"/>
</dbReference>
<dbReference type="RefSeq" id="WP_012711768.1">
    <property type="nucleotide sequence ID" value="NC_012726.1"/>
</dbReference>
<dbReference type="SMR" id="C4KIN0"/>
<dbReference type="GeneID" id="15298203"/>
<dbReference type="GeneID" id="84062145"/>
<dbReference type="KEGG" id="sid:M164_1841"/>
<dbReference type="HOGENOM" id="CLU_024321_0_0_2"/>
<dbReference type="UniPathway" id="UPA00053"/>
<dbReference type="Proteomes" id="UP000001479">
    <property type="component" value="Chromosome"/>
</dbReference>
<dbReference type="GO" id="GO:0005737">
    <property type="term" value="C:cytoplasm"/>
    <property type="evidence" value="ECO:0007669"/>
    <property type="project" value="UniProtKB-SubCell"/>
</dbReference>
<dbReference type="GO" id="GO:0003866">
    <property type="term" value="F:3-phosphoshikimate 1-carboxyvinyltransferase activity"/>
    <property type="evidence" value="ECO:0007669"/>
    <property type="project" value="UniProtKB-UniRule"/>
</dbReference>
<dbReference type="GO" id="GO:0008652">
    <property type="term" value="P:amino acid biosynthetic process"/>
    <property type="evidence" value="ECO:0007669"/>
    <property type="project" value="UniProtKB-KW"/>
</dbReference>
<dbReference type="GO" id="GO:0009073">
    <property type="term" value="P:aromatic amino acid family biosynthetic process"/>
    <property type="evidence" value="ECO:0007669"/>
    <property type="project" value="UniProtKB-KW"/>
</dbReference>
<dbReference type="GO" id="GO:0009423">
    <property type="term" value="P:chorismate biosynthetic process"/>
    <property type="evidence" value="ECO:0007669"/>
    <property type="project" value="UniProtKB-UniRule"/>
</dbReference>
<dbReference type="CDD" id="cd01556">
    <property type="entry name" value="EPSP_synthase"/>
    <property type="match status" value="1"/>
</dbReference>
<dbReference type="FunFam" id="3.65.10.10:FF:000015">
    <property type="entry name" value="3-phosphoshikimate 1-carboxyvinyltransferase"/>
    <property type="match status" value="1"/>
</dbReference>
<dbReference type="Gene3D" id="3.65.10.10">
    <property type="entry name" value="Enolpyruvate transferase domain"/>
    <property type="match status" value="2"/>
</dbReference>
<dbReference type="HAMAP" id="MF_00210">
    <property type="entry name" value="EPSP_synth"/>
    <property type="match status" value="1"/>
</dbReference>
<dbReference type="InterPro" id="IPR001986">
    <property type="entry name" value="Enolpyruvate_Tfrase_dom"/>
</dbReference>
<dbReference type="InterPro" id="IPR036968">
    <property type="entry name" value="Enolpyruvate_Tfrase_sf"/>
</dbReference>
<dbReference type="InterPro" id="IPR006264">
    <property type="entry name" value="EPSP_synthase"/>
</dbReference>
<dbReference type="InterPro" id="IPR023193">
    <property type="entry name" value="EPSP_synthase_CS"/>
</dbReference>
<dbReference type="InterPro" id="IPR013792">
    <property type="entry name" value="RNA3'P_cycl/enolpyr_Trfase_a/b"/>
</dbReference>
<dbReference type="NCBIfam" id="TIGR01356">
    <property type="entry name" value="aroA"/>
    <property type="match status" value="1"/>
</dbReference>
<dbReference type="PANTHER" id="PTHR21090">
    <property type="entry name" value="AROM/DEHYDROQUINATE SYNTHASE"/>
    <property type="match status" value="1"/>
</dbReference>
<dbReference type="PANTHER" id="PTHR21090:SF5">
    <property type="entry name" value="PENTAFUNCTIONAL AROM POLYPEPTIDE"/>
    <property type="match status" value="1"/>
</dbReference>
<dbReference type="Pfam" id="PF00275">
    <property type="entry name" value="EPSP_synthase"/>
    <property type="match status" value="1"/>
</dbReference>
<dbReference type="PIRSF" id="PIRSF000505">
    <property type="entry name" value="EPSPS"/>
    <property type="match status" value="1"/>
</dbReference>
<dbReference type="SUPFAM" id="SSF55205">
    <property type="entry name" value="EPT/RTPC-like"/>
    <property type="match status" value="1"/>
</dbReference>
<dbReference type="PROSITE" id="PS00104">
    <property type="entry name" value="EPSP_SYNTHASE_1"/>
    <property type="match status" value="1"/>
</dbReference>
<dbReference type="PROSITE" id="PS00885">
    <property type="entry name" value="EPSP_SYNTHASE_2"/>
    <property type="match status" value="1"/>
</dbReference>
<reference key="1">
    <citation type="journal article" date="2009" name="Proc. Natl. Acad. Sci. U.S.A.">
        <title>Biogeography of the Sulfolobus islandicus pan-genome.</title>
        <authorList>
            <person name="Reno M.L."/>
            <person name="Held N.L."/>
            <person name="Fields C.J."/>
            <person name="Burke P.V."/>
            <person name="Whitaker R.J."/>
        </authorList>
    </citation>
    <scope>NUCLEOTIDE SEQUENCE [LARGE SCALE GENOMIC DNA]</scope>
    <source>
        <strain>M.16.4 / Kamchatka #3</strain>
    </source>
</reference>
<protein>
    <recommendedName>
        <fullName evidence="1">3-phosphoshikimate 1-carboxyvinyltransferase</fullName>
        <ecNumber evidence="1">2.5.1.19</ecNumber>
    </recommendedName>
    <alternativeName>
        <fullName evidence="1">5-enolpyruvylshikimate-3-phosphate synthase</fullName>
        <shortName evidence="1">EPSP synthase</shortName>
        <shortName evidence="1">EPSPS</shortName>
    </alternativeName>
</protein>
<comment type="function">
    <text evidence="1">Catalyzes the transfer of the enolpyruvyl moiety of phosphoenolpyruvate (PEP) to the 5-hydroxyl of shikimate-3-phosphate (S3P) to produce enolpyruvyl shikimate-3-phosphate and inorganic phosphate.</text>
</comment>
<comment type="catalytic activity">
    <reaction evidence="1">
        <text>3-phosphoshikimate + phosphoenolpyruvate = 5-O-(1-carboxyvinyl)-3-phosphoshikimate + phosphate</text>
        <dbReference type="Rhea" id="RHEA:21256"/>
        <dbReference type="ChEBI" id="CHEBI:43474"/>
        <dbReference type="ChEBI" id="CHEBI:57701"/>
        <dbReference type="ChEBI" id="CHEBI:58702"/>
        <dbReference type="ChEBI" id="CHEBI:145989"/>
        <dbReference type="EC" id="2.5.1.19"/>
    </reaction>
    <physiologicalReaction direction="left-to-right" evidence="1">
        <dbReference type="Rhea" id="RHEA:21257"/>
    </physiologicalReaction>
</comment>
<comment type="pathway">
    <text evidence="1">Metabolic intermediate biosynthesis; chorismate biosynthesis.</text>
</comment>
<comment type="subunit">
    <text evidence="1">Monomer.</text>
</comment>
<comment type="subcellular location">
    <subcellularLocation>
        <location evidence="1">Cytoplasm</location>
    </subcellularLocation>
</comment>
<comment type="similarity">
    <text evidence="1">Belongs to the EPSP synthase family.</text>
</comment>
<sequence>MIVRIYPSEISGTIKAPQSKSLAIRLIFLSLFTRIHLHNLVLSEDVIDAINSVRALGVEVKNNSEFIPPEKLEIKKKFIKLKGSGTTLRMLIPIVAAIGGEVTIDAEESLRRRPLKRIVEALSNYGISFSSSSLPLTITGKLSSYNIKISGDESSQYISGLIYALHILNGGSIEILPPISSKSYILLTVDLFNRFGSNVKFYGNKIHINPNNLVEFQGEVAGDYGLASFYALSALLSGGRTTIVNLWEPKEYFGDHSIVKILKEMGATSEYLDGKWYVEAKDKYSSIKVNIDDAPDLAMTIAGLAAIAEGTSEITGIERLRIKESDRIESIRKVLGLYGVGSEVKSNSILIFGINKRMLSSPITDCLNDHRVAMMSSALALVNGGVITSAECVSKSNPNYWQDLLSLNAKISIE</sequence>
<feature type="chain" id="PRO_1000204172" description="3-phosphoshikimate 1-carboxyvinyltransferase">
    <location>
        <begin position="1"/>
        <end position="414"/>
    </location>
</feature>
<feature type="active site" description="Proton acceptor" evidence="1">
    <location>
        <position position="296"/>
    </location>
</feature>
<feature type="binding site" evidence="1">
    <location>
        <position position="20"/>
    </location>
    <ligand>
        <name>3-phosphoshikimate</name>
        <dbReference type="ChEBI" id="CHEBI:145989"/>
    </ligand>
</feature>
<feature type="binding site" evidence="1">
    <location>
        <position position="20"/>
    </location>
    <ligand>
        <name>phosphoenolpyruvate</name>
        <dbReference type="ChEBI" id="CHEBI:58702"/>
    </ligand>
</feature>
<feature type="binding site" evidence="1">
    <location>
        <position position="21"/>
    </location>
    <ligand>
        <name>3-phosphoshikimate</name>
        <dbReference type="ChEBI" id="CHEBI:145989"/>
    </ligand>
</feature>
<feature type="binding site" evidence="1">
    <location>
        <position position="25"/>
    </location>
    <ligand>
        <name>3-phosphoshikimate</name>
        <dbReference type="ChEBI" id="CHEBI:145989"/>
    </ligand>
</feature>
<feature type="binding site" evidence="1">
    <location>
        <position position="85"/>
    </location>
    <ligand>
        <name>phosphoenolpyruvate</name>
        <dbReference type="ChEBI" id="CHEBI:58702"/>
    </ligand>
</feature>
<feature type="binding site" evidence="1">
    <location>
        <position position="113"/>
    </location>
    <ligand>
        <name>phosphoenolpyruvate</name>
        <dbReference type="ChEBI" id="CHEBI:58702"/>
    </ligand>
</feature>
<feature type="binding site" evidence="1">
    <location>
        <position position="154"/>
    </location>
    <ligand>
        <name>3-phosphoshikimate</name>
        <dbReference type="ChEBI" id="CHEBI:145989"/>
    </ligand>
</feature>
<feature type="binding site" evidence="1">
    <location>
        <position position="155"/>
    </location>
    <ligand>
        <name>3-phosphoshikimate</name>
        <dbReference type="ChEBI" id="CHEBI:145989"/>
    </ligand>
</feature>
<feature type="binding site" evidence="1">
    <location>
        <position position="156"/>
    </location>
    <ligand>
        <name>3-phosphoshikimate</name>
        <dbReference type="ChEBI" id="CHEBI:145989"/>
    </ligand>
</feature>
<feature type="binding site" evidence="1">
    <location>
        <position position="156"/>
    </location>
    <ligand>
        <name>phosphoenolpyruvate</name>
        <dbReference type="ChEBI" id="CHEBI:58702"/>
    </ligand>
</feature>
<feature type="binding site" evidence="1">
    <location>
        <position position="181"/>
    </location>
    <ligand>
        <name>3-phosphoshikimate</name>
        <dbReference type="ChEBI" id="CHEBI:145989"/>
    </ligand>
</feature>
<feature type="binding site" evidence="1">
    <location>
        <position position="296"/>
    </location>
    <ligand>
        <name>3-phosphoshikimate</name>
        <dbReference type="ChEBI" id="CHEBI:145989"/>
    </ligand>
</feature>
<feature type="binding site" evidence="1">
    <location>
        <position position="323"/>
    </location>
    <ligand>
        <name>3-phosphoshikimate</name>
        <dbReference type="ChEBI" id="CHEBI:145989"/>
    </ligand>
</feature>
<feature type="binding site" evidence="1">
    <location>
        <position position="327"/>
    </location>
    <ligand>
        <name>phosphoenolpyruvate</name>
        <dbReference type="ChEBI" id="CHEBI:58702"/>
    </ligand>
</feature>
<feature type="binding site" evidence="1">
    <location>
        <position position="371"/>
    </location>
    <ligand>
        <name>phosphoenolpyruvate</name>
        <dbReference type="ChEBI" id="CHEBI:58702"/>
    </ligand>
</feature>
<feature type="binding site" evidence="1">
    <location>
        <position position="395"/>
    </location>
    <ligand>
        <name>phosphoenolpyruvate</name>
        <dbReference type="ChEBI" id="CHEBI:58702"/>
    </ligand>
</feature>
<gene>
    <name evidence="1" type="primary">aroA</name>
    <name type="ordered locus">M164_1841</name>
</gene>
<keyword id="KW-0028">Amino-acid biosynthesis</keyword>
<keyword id="KW-0057">Aromatic amino acid biosynthesis</keyword>
<keyword id="KW-0963">Cytoplasm</keyword>
<keyword id="KW-0808">Transferase</keyword>
<evidence type="ECO:0000255" key="1">
    <source>
        <dbReference type="HAMAP-Rule" id="MF_00210"/>
    </source>
</evidence>
<name>AROA_SACI6</name>
<proteinExistence type="inferred from homology"/>
<accession>C4KIN0</accession>
<organism>
    <name type="scientific">Saccharolobus islandicus (strain M.16.4 / Kamchatka #3)</name>
    <name type="common">Sulfolobus islandicus</name>
    <dbReference type="NCBI Taxonomy" id="426118"/>
    <lineage>
        <taxon>Archaea</taxon>
        <taxon>Thermoproteota</taxon>
        <taxon>Thermoprotei</taxon>
        <taxon>Sulfolobales</taxon>
        <taxon>Sulfolobaceae</taxon>
        <taxon>Saccharolobus</taxon>
    </lineage>
</organism>